<keyword id="KW-0963">Cytoplasm</keyword>
<keyword id="KW-0238">DNA-binding</keyword>
<keyword id="KW-0597">Phosphoprotein</keyword>
<keyword id="KW-0804">Transcription</keyword>
<keyword id="KW-0805">Transcription regulation</keyword>
<keyword id="KW-0902">Two-component regulatory system</keyword>
<accession>Q9AE24</accession>
<accession>Q64PH5</accession>
<accession>Q9R5Z7</accession>
<evidence type="ECO:0000250" key="1"/>
<evidence type="ECO:0000255" key="2">
    <source>
        <dbReference type="PROSITE-ProRule" id="PRU00169"/>
    </source>
</evidence>
<evidence type="ECO:0000255" key="3">
    <source>
        <dbReference type="PROSITE-ProRule" id="PRU01091"/>
    </source>
</evidence>
<evidence type="ECO:0000305" key="4"/>
<reference evidence="4" key="1">
    <citation type="journal article" date="1993" name="Mol. Microbiol.">
        <title>Cloning and identification of a two-component signal-transducing regulatory system from Bacteroides fragilis.</title>
        <authorList>
            <person name="Rasmussen B.A."/>
            <person name="Kovacs E."/>
        </authorList>
    </citation>
    <scope>NUCLEOTIDE SEQUENCE [GENOMIC DNA]</scope>
</reference>
<reference key="2">
    <citation type="journal article" date="2004" name="Proc. Natl. Acad. Sci. U.S.A.">
        <title>Genomic analysis of Bacteroides fragilis reveals extensive DNA inversions regulating cell surface adaptation.</title>
        <authorList>
            <person name="Kuwahara T."/>
            <person name="Yamashita A."/>
            <person name="Hirakawa H."/>
            <person name="Nakayama H."/>
            <person name="Toh H."/>
            <person name="Okada N."/>
            <person name="Kuhara S."/>
            <person name="Hattori M."/>
            <person name="Hayashi T."/>
            <person name="Ohnishi Y."/>
        </authorList>
    </citation>
    <scope>NUCLEOTIDE SEQUENCE [LARGE SCALE GENOMIC DNA]</scope>
    <source>
        <strain>YCH46</strain>
    </source>
</reference>
<name>RPRY_BACFR</name>
<comment type="function">
    <text>Member of the two-component regulatory system RprX/RprY.</text>
</comment>
<comment type="subcellular location">
    <subcellularLocation>
        <location evidence="1">Cytoplasm</location>
    </subcellularLocation>
</comment>
<comment type="PTM">
    <text evidence="4">Phosphorylated by RprX.</text>
</comment>
<sequence>MIDMDEKLRILLCEDDENLGMLLREYLQAKGYSAELYPDGEAGFKAFLKNKYDLCVFDVMMPKKDGFTLAQEVRAANAEIPIIFLTAKTLKEDILEGFKIGADDYITKPFSMEELTFRIEAILRRVRGKKNKESNVYKIGKFTFDTQKQILAIGDKQTKLTTKESELLGLLCAHANEILQRDFALKTIWIDDNYFNARSMDVYITKLRKHLKDDDSIEIINIHGKGYKLITPEPES</sequence>
<feature type="chain" id="PRO_0000081220" description="Transcriptional regulatory protein RprY">
    <location>
        <begin position="1"/>
        <end position="236"/>
    </location>
</feature>
<feature type="domain" description="Response regulatory" evidence="2">
    <location>
        <begin position="9"/>
        <end position="123"/>
    </location>
</feature>
<feature type="DNA-binding region" description="OmpR/PhoB-type" evidence="3">
    <location>
        <begin position="134"/>
        <end position="231"/>
    </location>
</feature>
<feature type="modified residue" description="4-aspartylphosphate" evidence="2">
    <location>
        <position position="58"/>
    </location>
</feature>
<feature type="sequence conflict" description="In Ref. 1; AAK14820." evidence="4" ref="1">
    <original>V</original>
    <variation>I</variation>
    <location>
        <position position="136"/>
    </location>
</feature>
<proteinExistence type="inferred from homology"/>
<protein>
    <recommendedName>
        <fullName>Transcriptional regulatory protein RprY</fullName>
    </recommendedName>
</protein>
<gene>
    <name type="primary">rprY</name>
    <name type="ordered locus">BF3864</name>
</gene>
<organism>
    <name type="scientific">Bacteroides fragilis (strain YCH46)</name>
    <dbReference type="NCBI Taxonomy" id="295405"/>
    <lineage>
        <taxon>Bacteria</taxon>
        <taxon>Pseudomonadati</taxon>
        <taxon>Bacteroidota</taxon>
        <taxon>Bacteroidia</taxon>
        <taxon>Bacteroidales</taxon>
        <taxon>Bacteroidaceae</taxon>
        <taxon>Bacteroides</taxon>
    </lineage>
</organism>
<dbReference type="EMBL" id="S59000">
    <property type="protein sequence ID" value="AAK14820.1"/>
    <property type="molecule type" value="Genomic_DNA"/>
</dbReference>
<dbReference type="EMBL" id="AP006841">
    <property type="protein sequence ID" value="BAD50606.1"/>
    <property type="molecule type" value="Genomic_DNA"/>
</dbReference>
<dbReference type="PIR" id="S33662">
    <property type="entry name" value="S33662"/>
</dbReference>
<dbReference type="RefSeq" id="YP_101140.1">
    <property type="nucleotide sequence ID" value="NC_006347.1"/>
</dbReference>
<dbReference type="SMR" id="Q9AE24"/>
<dbReference type="STRING" id="295405.BF3864"/>
<dbReference type="KEGG" id="bfr:BF3864"/>
<dbReference type="PATRIC" id="fig|295405.11.peg.3709"/>
<dbReference type="HOGENOM" id="CLU_000445_30_3_10"/>
<dbReference type="OrthoDB" id="9790442at2"/>
<dbReference type="Proteomes" id="UP000002197">
    <property type="component" value="Chromosome"/>
</dbReference>
<dbReference type="GO" id="GO:0005829">
    <property type="term" value="C:cytosol"/>
    <property type="evidence" value="ECO:0007669"/>
    <property type="project" value="TreeGrafter"/>
</dbReference>
<dbReference type="GO" id="GO:0032993">
    <property type="term" value="C:protein-DNA complex"/>
    <property type="evidence" value="ECO:0007669"/>
    <property type="project" value="TreeGrafter"/>
</dbReference>
<dbReference type="GO" id="GO:0000156">
    <property type="term" value="F:phosphorelay response regulator activity"/>
    <property type="evidence" value="ECO:0007669"/>
    <property type="project" value="TreeGrafter"/>
</dbReference>
<dbReference type="GO" id="GO:0000976">
    <property type="term" value="F:transcription cis-regulatory region binding"/>
    <property type="evidence" value="ECO:0007669"/>
    <property type="project" value="TreeGrafter"/>
</dbReference>
<dbReference type="GO" id="GO:0000160">
    <property type="term" value="P:phosphorelay signal transduction system"/>
    <property type="evidence" value="ECO:0000303"/>
    <property type="project" value="UniProtKB"/>
</dbReference>
<dbReference type="GO" id="GO:0006355">
    <property type="term" value="P:regulation of DNA-templated transcription"/>
    <property type="evidence" value="ECO:0007669"/>
    <property type="project" value="InterPro"/>
</dbReference>
<dbReference type="CDD" id="cd17574">
    <property type="entry name" value="REC_OmpR"/>
    <property type="match status" value="1"/>
</dbReference>
<dbReference type="CDD" id="cd00383">
    <property type="entry name" value="trans_reg_C"/>
    <property type="match status" value="1"/>
</dbReference>
<dbReference type="FunFam" id="1.10.10.10:FF:000273">
    <property type="entry name" value="DNA-binding response regulator RprY"/>
    <property type="match status" value="1"/>
</dbReference>
<dbReference type="FunFam" id="3.40.50.2300:FF:000073">
    <property type="entry name" value="DNA-binding response regulator RprY"/>
    <property type="match status" value="1"/>
</dbReference>
<dbReference type="Gene3D" id="3.40.50.2300">
    <property type="match status" value="1"/>
</dbReference>
<dbReference type="Gene3D" id="6.10.250.690">
    <property type="match status" value="1"/>
</dbReference>
<dbReference type="Gene3D" id="1.10.10.10">
    <property type="entry name" value="Winged helix-like DNA-binding domain superfamily/Winged helix DNA-binding domain"/>
    <property type="match status" value="1"/>
</dbReference>
<dbReference type="InterPro" id="IPR011006">
    <property type="entry name" value="CheY-like_superfamily"/>
</dbReference>
<dbReference type="InterPro" id="IPR001867">
    <property type="entry name" value="OmpR/PhoB-type_DNA-bd"/>
</dbReference>
<dbReference type="InterPro" id="IPR016032">
    <property type="entry name" value="Sig_transdc_resp-reg_C-effctor"/>
</dbReference>
<dbReference type="InterPro" id="IPR001789">
    <property type="entry name" value="Sig_transdc_resp-reg_receiver"/>
</dbReference>
<dbReference type="InterPro" id="IPR039420">
    <property type="entry name" value="WalR-like"/>
</dbReference>
<dbReference type="InterPro" id="IPR036388">
    <property type="entry name" value="WH-like_DNA-bd_sf"/>
</dbReference>
<dbReference type="PANTHER" id="PTHR48111:SF40">
    <property type="entry name" value="PHOSPHATE REGULON TRANSCRIPTIONAL REGULATORY PROTEIN PHOB"/>
    <property type="match status" value="1"/>
</dbReference>
<dbReference type="PANTHER" id="PTHR48111">
    <property type="entry name" value="REGULATOR OF RPOS"/>
    <property type="match status" value="1"/>
</dbReference>
<dbReference type="Pfam" id="PF00072">
    <property type="entry name" value="Response_reg"/>
    <property type="match status" value="1"/>
</dbReference>
<dbReference type="Pfam" id="PF00486">
    <property type="entry name" value="Trans_reg_C"/>
    <property type="match status" value="1"/>
</dbReference>
<dbReference type="SMART" id="SM00448">
    <property type="entry name" value="REC"/>
    <property type="match status" value="1"/>
</dbReference>
<dbReference type="SMART" id="SM00862">
    <property type="entry name" value="Trans_reg_C"/>
    <property type="match status" value="1"/>
</dbReference>
<dbReference type="SUPFAM" id="SSF46894">
    <property type="entry name" value="C-terminal effector domain of the bipartite response regulators"/>
    <property type="match status" value="1"/>
</dbReference>
<dbReference type="SUPFAM" id="SSF52172">
    <property type="entry name" value="CheY-like"/>
    <property type="match status" value="1"/>
</dbReference>
<dbReference type="PROSITE" id="PS51755">
    <property type="entry name" value="OMPR_PHOB"/>
    <property type="match status" value="1"/>
</dbReference>
<dbReference type="PROSITE" id="PS50110">
    <property type="entry name" value="RESPONSE_REGULATORY"/>
    <property type="match status" value="1"/>
</dbReference>